<sequence>MGNSALRAHVETAQKTGVFQLKDRGLTEFPSELQKLTSNLRTIDLSNNKIDSLPPLIIGKFTLLKSLSLNNNKLTVLPDELCNLKKLETLSLNNNHLRELPSTFGQLSALKTLSLSGNQLGALPPQLCCLRHLDVVDLSKNQIRSIPDTVGELQAIELNLNQNQISQLSVKISCCPRLKVLRLEENCLELSMLPQSILSDSQICLLAVEGNLFEIKKFRELEGYDKYMERFTATKKKFA</sequence>
<name>LRC57_MOUSE</name>
<proteinExistence type="evidence at protein level"/>
<accession>Q9D1G5</accession>
<accession>Q9DC95</accession>
<protein>
    <recommendedName>
        <fullName>Leucine-rich repeat-containing protein 57</fullName>
    </recommendedName>
</protein>
<comment type="subcellular location">
    <subcellularLocation>
        <location evidence="1">Membrane</location>
        <topology evidence="1">Lipid-anchor</topology>
    </subcellularLocation>
</comment>
<organism>
    <name type="scientific">Mus musculus</name>
    <name type="common">Mouse</name>
    <dbReference type="NCBI Taxonomy" id="10090"/>
    <lineage>
        <taxon>Eukaryota</taxon>
        <taxon>Metazoa</taxon>
        <taxon>Chordata</taxon>
        <taxon>Craniata</taxon>
        <taxon>Vertebrata</taxon>
        <taxon>Euteleostomi</taxon>
        <taxon>Mammalia</taxon>
        <taxon>Eutheria</taxon>
        <taxon>Euarchontoglires</taxon>
        <taxon>Glires</taxon>
        <taxon>Rodentia</taxon>
        <taxon>Myomorpha</taxon>
        <taxon>Muroidea</taxon>
        <taxon>Muridae</taxon>
        <taxon>Murinae</taxon>
        <taxon>Mus</taxon>
        <taxon>Mus</taxon>
    </lineage>
</organism>
<evidence type="ECO:0000250" key="1">
    <source>
        <dbReference type="UniProtKB" id="Q8N9N7"/>
    </source>
</evidence>
<evidence type="ECO:0000305" key="2"/>
<feature type="initiator methionine" description="Removed" evidence="1">
    <location>
        <position position="1"/>
    </location>
</feature>
<feature type="chain" id="PRO_0000227779" description="Leucine-rich repeat-containing protein 57">
    <location>
        <begin position="2"/>
        <end position="239"/>
    </location>
</feature>
<feature type="repeat" description="LRR 1">
    <location>
        <begin position="39"/>
        <end position="60"/>
    </location>
</feature>
<feature type="repeat" description="LRR 2">
    <location>
        <begin position="63"/>
        <end position="85"/>
    </location>
</feature>
<feature type="repeat" description="LRR 3">
    <location>
        <begin position="86"/>
        <end position="107"/>
    </location>
</feature>
<feature type="repeat" description="LRR 4">
    <location>
        <begin position="109"/>
        <end position="130"/>
    </location>
</feature>
<feature type="repeat" description="LRR 5">
    <location>
        <begin position="132"/>
        <end position="153"/>
    </location>
</feature>
<feature type="repeat" description="LRR 6">
    <location>
        <begin position="154"/>
        <end position="175"/>
    </location>
</feature>
<feature type="repeat" description="LRR 7">
    <location>
        <begin position="177"/>
        <end position="197"/>
    </location>
</feature>
<feature type="repeat" description="LRR 8">
    <location>
        <begin position="202"/>
        <end position="222"/>
    </location>
</feature>
<feature type="lipid moiety-binding region" description="N-myristoyl glycine" evidence="1">
    <location>
        <position position="2"/>
    </location>
</feature>
<feature type="sequence conflict" description="In Ref. 1; BAB22524." evidence="2" ref="1">
    <original>E</original>
    <variation>G</variation>
    <location>
        <position position="209"/>
    </location>
</feature>
<feature type="sequence conflict" description="In Ref. 1; BAB22524." evidence="2" ref="1">
    <original>F</original>
    <variation>L</variation>
    <location>
        <position position="218"/>
    </location>
</feature>
<gene>
    <name type="primary">Lrrc57</name>
</gene>
<keyword id="KW-0433">Leucine-rich repeat</keyword>
<keyword id="KW-0449">Lipoprotein</keyword>
<keyword id="KW-0472">Membrane</keyword>
<keyword id="KW-0519">Myristate</keyword>
<keyword id="KW-1185">Reference proteome</keyword>
<keyword id="KW-0677">Repeat</keyword>
<dbReference type="EMBL" id="AK003037">
    <property type="protein sequence ID" value="BAB22524.1"/>
    <property type="molecule type" value="mRNA"/>
</dbReference>
<dbReference type="EMBL" id="AK003592">
    <property type="protein sequence ID" value="BAB22881.1"/>
    <property type="molecule type" value="mRNA"/>
</dbReference>
<dbReference type="CCDS" id="CCDS16623.1"/>
<dbReference type="SMR" id="Q9D1G5"/>
<dbReference type="FunCoup" id="Q9D1G5">
    <property type="interactions" value="2129"/>
</dbReference>
<dbReference type="STRING" id="10090.ENSMUSP00000099555"/>
<dbReference type="iPTMnet" id="Q9D1G5"/>
<dbReference type="PhosphoSitePlus" id="Q9D1G5"/>
<dbReference type="SwissPalm" id="Q9D1G5"/>
<dbReference type="PaxDb" id="10090-ENSMUSP00000099555"/>
<dbReference type="ProteomicsDB" id="252510"/>
<dbReference type="Pumba" id="Q9D1G5"/>
<dbReference type="AGR" id="MGI:1913856"/>
<dbReference type="MGI" id="MGI:1913856">
    <property type="gene designation" value="Lrrc57"/>
</dbReference>
<dbReference type="eggNOG" id="KOG0619">
    <property type="taxonomic scope" value="Eukaryota"/>
</dbReference>
<dbReference type="InParanoid" id="Q9D1G5"/>
<dbReference type="PhylomeDB" id="Q9D1G5"/>
<dbReference type="CD-CODE" id="CE726F99">
    <property type="entry name" value="Postsynaptic density"/>
</dbReference>
<dbReference type="ChiTaRS" id="Lrrc57">
    <property type="organism name" value="mouse"/>
</dbReference>
<dbReference type="PRO" id="PR:Q9D1G5"/>
<dbReference type="Proteomes" id="UP000000589">
    <property type="component" value="Unplaced"/>
</dbReference>
<dbReference type="RNAct" id="Q9D1G5">
    <property type="molecule type" value="protein"/>
</dbReference>
<dbReference type="GO" id="GO:0016020">
    <property type="term" value="C:membrane"/>
    <property type="evidence" value="ECO:0007669"/>
    <property type="project" value="UniProtKB-SubCell"/>
</dbReference>
<dbReference type="FunFam" id="3.80.10.10:FF:000458">
    <property type="entry name" value="Leucine rich repeat containing 57"/>
    <property type="match status" value="1"/>
</dbReference>
<dbReference type="FunFam" id="3.80.10.10:FF:000230">
    <property type="entry name" value="Leucine-rich repeat-containing protein 57"/>
    <property type="match status" value="1"/>
</dbReference>
<dbReference type="Gene3D" id="3.80.10.10">
    <property type="entry name" value="Ribonuclease Inhibitor"/>
    <property type="match status" value="2"/>
</dbReference>
<dbReference type="InterPro" id="IPR001611">
    <property type="entry name" value="Leu-rich_rpt"/>
</dbReference>
<dbReference type="InterPro" id="IPR025875">
    <property type="entry name" value="Leu-rich_rpt_4"/>
</dbReference>
<dbReference type="InterPro" id="IPR003591">
    <property type="entry name" value="Leu-rich_rpt_typical-subtyp"/>
</dbReference>
<dbReference type="InterPro" id="IPR032675">
    <property type="entry name" value="LRR_dom_sf"/>
</dbReference>
<dbReference type="InterPro" id="IPR050216">
    <property type="entry name" value="LRR_domain-containing"/>
</dbReference>
<dbReference type="PANTHER" id="PTHR48051">
    <property type="match status" value="1"/>
</dbReference>
<dbReference type="PANTHER" id="PTHR48051:SF62">
    <property type="entry name" value="LEUCINE-RICH REPEAT-CONTAINING PROTEIN 57"/>
    <property type="match status" value="1"/>
</dbReference>
<dbReference type="Pfam" id="PF12799">
    <property type="entry name" value="LRR_4"/>
    <property type="match status" value="1"/>
</dbReference>
<dbReference type="Pfam" id="PF13855">
    <property type="entry name" value="LRR_8"/>
    <property type="match status" value="1"/>
</dbReference>
<dbReference type="PRINTS" id="PR00019">
    <property type="entry name" value="LEURICHRPT"/>
</dbReference>
<dbReference type="SMART" id="SM00364">
    <property type="entry name" value="LRR_BAC"/>
    <property type="match status" value="4"/>
</dbReference>
<dbReference type="SMART" id="SM00369">
    <property type="entry name" value="LRR_TYP"/>
    <property type="match status" value="6"/>
</dbReference>
<dbReference type="SUPFAM" id="SSF52058">
    <property type="entry name" value="L domain-like"/>
    <property type="match status" value="1"/>
</dbReference>
<dbReference type="PROSITE" id="PS51450">
    <property type="entry name" value="LRR"/>
    <property type="match status" value="7"/>
</dbReference>
<reference key="1">
    <citation type="journal article" date="2005" name="Science">
        <title>The transcriptional landscape of the mammalian genome.</title>
        <authorList>
            <person name="Carninci P."/>
            <person name="Kasukawa T."/>
            <person name="Katayama S."/>
            <person name="Gough J."/>
            <person name="Frith M.C."/>
            <person name="Maeda N."/>
            <person name="Oyama R."/>
            <person name="Ravasi T."/>
            <person name="Lenhard B."/>
            <person name="Wells C."/>
            <person name="Kodzius R."/>
            <person name="Shimokawa K."/>
            <person name="Bajic V.B."/>
            <person name="Brenner S.E."/>
            <person name="Batalov S."/>
            <person name="Forrest A.R."/>
            <person name="Zavolan M."/>
            <person name="Davis M.J."/>
            <person name="Wilming L.G."/>
            <person name="Aidinis V."/>
            <person name="Allen J.E."/>
            <person name="Ambesi-Impiombato A."/>
            <person name="Apweiler R."/>
            <person name="Aturaliya R.N."/>
            <person name="Bailey T.L."/>
            <person name="Bansal M."/>
            <person name="Baxter L."/>
            <person name="Beisel K.W."/>
            <person name="Bersano T."/>
            <person name="Bono H."/>
            <person name="Chalk A.M."/>
            <person name="Chiu K.P."/>
            <person name="Choudhary V."/>
            <person name="Christoffels A."/>
            <person name="Clutterbuck D.R."/>
            <person name="Crowe M.L."/>
            <person name="Dalla E."/>
            <person name="Dalrymple B.P."/>
            <person name="de Bono B."/>
            <person name="Della Gatta G."/>
            <person name="di Bernardo D."/>
            <person name="Down T."/>
            <person name="Engstrom P."/>
            <person name="Fagiolini M."/>
            <person name="Faulkner G."/>
            <person name="Fletcher C.F."/>
            <person name="Fukushima T."/>
            <person name="Furuno M."/>
            <person name="Futaki S."/>
            <person name="Gariboldi M."/>
            <person name="Georgii-Hemming P."/>
            <person name="Gingeras T.R."/>
            <person name="Gojobori T."/>
            <person name="Green R.E."/>
            <person name="Gustincich S."/>
            <person name="Harbers M."/>
            <person name="Hayashi Y."/>
            <person name="Hensch T.K."/>
            <person name="Hirokawa N."/>
            <person name="Hill D."/>
            <person name="Huminiecki L."/>
            <person name="Iacono M."/>
            <person name="Ikeo K."/>
            <person name="Iwama A."/>
            <person name="Ishikawa T."/>
            <person name="Jakt M."/>
            <person name="Kanapin A."/>
            <person name="Katoh M."/>
            <person name="Kawasawa Y."/>
            <person name="Kelso J."/>
            <person name="Kitamura H."/>
            <person name="Kitano H."/>
            <person name="Kollias G."/>
            <person name="Krishnan S.P."/>
            <person name="Kruger A."/>
            <person name="Kummerfeld S.K."/>
            <person name="Kurochkin I.V."/>
            <person name="Lareau L.F."/>
            <person name="Lazarevic D."/>
            <person name="Lipovich L."/>
            <person name="Liu J."/>
            <person name="Liuni S."/>
            <person name="McWilliam S."/>
            <person name="Madan Babu M."/>
            <person name="Madera M."/>
            <person name="Marchionni L."/>
            <person name="Matsuda H."/>
            <person name="Matsuzawa S."/>
            <person name="Miki H."/>
            <person name="Mignone F."/>
            <person name="Miyake S."/>
            <person name="Morris K."/>
            <person name="Mottagui-Tabar S."/>
            <person name="Mulder N."/>
            <person name="Nakano N."/>
            <person name="Nakauchi H."/>
            <person name="Ng P."/>
            <person name="Nilsson R."/>
            <person name="Nishiguchi S."/>
            <person name="Nishikawa S."/>
            <person name="Nori F."/>
            <person name="Ohara O."/>
            <person name="Okazaki Y."/>
            <person name="Orlando V."/>
            <person name="Pang K.C."/>
            <person name="Pavan W.J."/>
            <person name="Pavesi G."/>
            <person name="Pesole G."/>
            <person name="Petrovsky N."/>
            <person name="Piazza S."/>
            <person name="Reed J."/>
            <person name="Reid J.F."/>
            <person name="Ring B.Z."/>
            <person name="Ringwald M."/>
            <person name="Rost B."/>
            <person name="Ruan Y."/>
            <person name="Salzberg S.L."/>
            <person name="Sandelin A."/>
            <person name="Schneider C."/>
            <person name="Schoenbach C."/>
            <person name="Sekiguchi K."/>
            <person name="Semple C.A."/>
            <person name="Seno S."/>
            <person name="Sessa L."/>
            <person name="Sheng Y."/>
            <person name="Shibata Y."/>
            <person name="Shimada H."/>
            <person name="Shimada K."/>
            <person name="Silva D."/>
            <person name="Sinclair B."/>
            <person name="Sperling S."/>
            <person name="Stupka E."/>
            <person name="Sugiura K."/>
            <person name="Sultana R."/>
            <person name="Takenaka Y."/>
            <person name="Taki K."/>
            <person name="Tammoja K."/>
            <person name="Tan S.L."/>
            <person name="Tang S."/>
            <person name="Taylor M.S."/>
            <person name="Tegner J."/>
            <person name="Teichmann S.A."/>
            <person name="Ueda H.R."/>
            <person name="van Nimwegen E."/>
            <person name="Verardo R."/>
            <person name="Wei C.L."/>
            <person name="Yagi K."/>
            <person name="Yamanishi H."/>
            <person name="Zabarovsky E."/>
            <person name="Zhu S."/>
            <person name="Zimmer A."/>
            <person name="Hide W."/>
            <person name="Bult C."/>
            <person name="Grimmond S.M."/>
            <person name="Teasdale R.D."/>
            <person name="Liu E.T."/>
            <person name="Brusic V."/>
            <person name="Quackenbush J."/>
            <person name="Wahlestedt C."/>
            <person name="Mattick J.S."/>
            <person name="Hume D.A."/>
            <person name="Kai C."/>
            <person name="Sasaki D."/>
            <person name="Tomaru Y."/>
            <person name="Fukuda S."/>
            <person name="Kanamori-Katayama M."/>
            <person name="Suzuki M."/>
            <person name="Aoki J."/>
            <person name="Arakawa T."/>
            <person name="Iida J."/>
            <person name="Imamura K."/>
            <person name="Itoh M."/>
            <person name="Kato T."/>
            <person name="Kawaji H."/>
            <person name="Kawagashira N."/>
            <person name="Kawashima T."/>
            <person name="Kojima M."/>
            <person name="Kondo S."/>
            <person name="Konno H."/>
            <person name="Nakano K."/>
            <person name="Ninomiya N."/>
            <person name="Nishio T."/>
            <person name="Okada M."/>
            <person name="Plessy C."/>
            <person name="Shibata K."/>
            <person name="Shiraki T."/>
            <person name="Suzuki S."/>
            <person name="Tagami M."/>
            <person name="Waki K."/>
            <person name="Watahiki A."/>
            <person name="Okamura-Oho Y."/>
            <person name="Suzuki H."/>
            <person name="Kawai J."/>
            <person name="Hayashizaki Y."/>
        </authorList>
    </citation>
    <scope>NUCLEOTIDE SEQUENCE [LARGE SCALE MRNA]</scope>
    <source>
        <strain>C57BL/6J</strain>
        <tissue>Brain</tissue>
        <tissue>Embryo</tissue>
    </source>
</reference>
<reference key="2">
    <citation type="journal article" date="2010" name="Cell">
        <title>A tissue-specific atlas of mouse protein phosphorylation and expression.</title>
        <authorList>
            <person name="Huttlin E.L."/>
            <person name="Jedrychowski M.P."/>
            <person name="Elias J.E."/>
            <person name="Goswami T."/>
            <person name="Rad R."/>
            <person name="Beausoleil S.A."/>
            <person name="Villen J."/>
            <person name="Haas W."/>
            <person name="Sowa M.E."/>
            <person name="Gygi S.P."/>
        </authorList>
    </citation>
    <scope>IDENTIFICATION BY MASS SPECTROMETRY [LARGE SCALE ANALYSIS]</scope>
    <source>
        <tissue>Brain</tissue>
        <tissue>Brown adipose tissue</tissue>
        <tissue>Heart</tissue>
        <tissue>Kidney</tissue>
        <tissue>Liver</tissue>
        <tissue>Lung</tissue>
        <tissue>Spleen</tissue>
        <tissue>Testis</tissue>
    </source>
</reference>